<protein>
    <recommendedName>
        <fullName evidence="1">Aspartate 1-decarboxylase</fullName>
        <ecNumber evidence="1">4.1.1.11</ecNumber>
    </recommendedName>
    <alternativeName>
        <fullName evidence="1">Aspartate alpha-decarboxylase</fullName>
    </alternativeName>
    <component>
        <recommendedName>
            <fullName evidence="1">Aspartate 1-decarboxylase beta chain</fullName>
        </recommendedName>
    </component>
    <component>
        <recommendedName>
            <fullName evidence="1">Aspartate 1-decarboxylase alpha chain</fullName>
        </recommendedName>
    </component>
</protein>
<organism>
    <name type="scientific">Polynucleobacter asymbioticus (strain DSM 18221 / CIP 109841 / QLW-P1DMWA-1)</name>
    <name type="common">Polynucleobacter necessarius subsp. asymbioticus</name>
    <dbReference type="NCBI Taxonomy" id="312153"/>
    <lineage>
        <taxon>Bacteria</taxon>
        <taxon>Pseudomonadati</taxon>
        <taxon>Pseudomonadota</taxon>
        <taxon>Betaproteobacteria</taxon>
        <taxon>Burkholderiales</taxon>
        <taxon>Burkholderiaceae</taxon>
        <taxon>Polynucleobacter</taxon>
    </lineage>
</organism>
<gene>
    <name evidence="1" type="primary">panD</name>
    <name type="ordered locus">Pnuc_0652</name>
</gene>
<proteinExistence type="inferred from homology"/>
<evidence type="ECO:0000255" key="1">
    <source>
        <dbReference type="HAMAP-Rule" id="MF_00446"/>
    </source>
</evidence>
<dbReference type="EC" id="4.1.1.11" evidence="1"/>
<dbReference type="EMBL" id="CP000655">
    <property type="protein sequence ID" value="ABP33870.1"/>
    <property type="molecule type" value="Genomic_DNA"/>
</dbReference>
<dbReference type="RefSeq" id="WP_011902495.1">
    <property type="nucleotide sequence ID" value="NC_009379.1"/>
</dbReference>
<dbReference type="SMR" id="A4SWK6"/>
<dbReference type="GeneID" id="31481009"/>
<dbReference type="KEGG" id="pnu:Pnuc_0652"/>
<dbReference type="eggNOG" id="COG0853">
    <property type="taxonomic scope" value="Bacteria"/>
</dbReference>
<dbReference type="HOGENOM" id="CLU_115305_2_1_4"/>
<dbReference type="UniPathway" id="UPA00028">
    <property type="reaction ID" value="UER00002"/>
</dbReference>
<dbReference type="Proteomes" id="UP000000231">
    <property type="component" value="Chromosome"/>
</dbReference>
<dbReference type="GO" id="GO:0005829">
    <property type="term" value="C:cytosol"/>
    <property type="evidence" value="ECO:0007669"/>
    <property type="project" value="TreeGrafter"/>
</dbReference>
<dbReference type="GO" id="GO:0004068">
    <property type="term" value="F:aspartate 1-decarboxylase activity"/>
    <property type="evidence" value="ECO:0007669"/>
    <property type="project" value="UniProtKB-UniRule"/>
</dbReference>
<dbReference type="GO" id="GO:0006523">
    <property type="term" value="P:alanine biosynthetic process"/>
    <property type="evidence" value="ECO:0007669"/>
    <property type="project" value="InterPro"/>
</dbReference>
<dbReference type="GO" id="GO:0015940">
    <property type="term" value="P:pantothenate biosynthetic process"/>
    <property type="evidence" value="ECO:0007669"/>
    <property type="project" value="UniProtKB-UniRule"/>
</dbReference>
<dbReference type="CDD" id="cd06919">
    <property type="entry name" value="Asp_decarbox"/>
    <property type="match status" value="1"/>
</dbReference>
<dbReference type="Gene3D" id="2.40.40.20">
    <property type="match status" value="1"/>
</dbReference>
<dbReference type="HAMAP" id="MF_00446">
    <property type="entry name" value="PanD"/>
    <property type="match status" value="1"/>
</dbReference>
<dbReference type="InterPro" id="IPR009010">
    <property type="entry name" value="Asp_de-COase-like_dom_sf"/>
</dbReference>
<dbReference type="InterPro" id="IPR003190">
    <property type="entry name" value="Asp_decarbox"/>
</dbReference>
<dbReference type="NCBIfam" id="TIGR00223">
    <property type="entry name" value="panD"/>
    <property type="match status" value="1"/>
</dbReference>
<dbReference type="PANTHER" id="PTHR21012">
    <property type="entry name" value="ASPARTATE 1-DECARBOXYLASE"/>
    <property type="match status" value="1"/>
</dbReference>
<dbReference type="PANTHER" id="PTHR21012:SF0">
    <property type="entry name" value="ASPARTATE 1-DECARBOXYLASE"/>
    <property type="match status" value="1"/>
</dbReference>
<dbReference type="Pfam" id="PF02261">
    <property type="entry name" value="Asp_decarbox"/>
    <property type="match status" value="1"/>
</dbReference>
<dbReference type="PIRSF" id="PIRSF006246">
    <property type="entry name" value="Asp_decarbox"/>
    <property type="match status" value="1"/>
</dbReference>
<dbReference type="SUPFAM" id="SSF50692">
    <property type="entry name" value="ADC-like"/>
    <property type="match status" value="1"/>
</dbReference>
<keyword id="KW-0068">Autocatalytic cleavage</keyword>
<keyword id="KW-0963">Cytoplasm</keyword>
<keyword id="KW-0210">Decarboxylase</keyword>
<keyword id="KW-0456">Lyase</keyword>
<keyword id="KW-0566">Pantothenate biosynthesis</keyword>
<keyword id="KW-0670">Pyruvate</keyword>
<keyword id="KW-1185">Reference proteome</keyword>
<keyword id="KW-0704">Schiff base</keyword>
<keyword id="KW-0865">Zymogen</keyword>
<reference key="1">
    <citation type="journal article" date="2012" name="Stand. Genomic Sci.">
        <title>Complete genome sequence of Polynucleobacter necessarius subsp. asymbioticus type strain (QLW-P1DMWA-1(T)).</title>
        <authorList>
            <person name="Meincke L."/>
            <person name="Copeland A."/>
            <person name="Lapidus A."/>
            <person name="Lucas S."/>
            <person name="Berry K.W."/>
            <person name="Del Rio T.G."/>
            <person name="Hammon N."/>
            <person name="Dalin E."/>
            <person name="Tice H."/>
            <person name="Pitluck S."/>
            <person name="Richardson P."/>
            <person name="Bruce D."/>
            <person name="Goodwin L."/>
            <person name="Han C."/>
            <person name="Tapia R."/>
            <person name="Detter J.C."/>
            <person name="Schmutz J."/>
            <person name="Brettin T."/>
            <person name="Larimer F."/>
            <person name="Land M."/>
            <person name="Hauser L."/>
            <person name="Kyrpides N.C."/>
            <person name="Ivanova N."/>
            <person name="Goker M."/>
            <person name="Woyke T."/>
            <person name="Wu Q.L."/>
            <person name="Pockl M."/>
            <person name="Hahn M.W."/>
            <person name="Klenk H.P."/>
        </authorList>
    </citation>
    <scope>NUCLEOTIDE SEQUENCE [LARGE SCALE GENOMIC DNA]</scope>
    <source>
        <strain>DSM 18221 / CIP 109841 / QLW-P1DMWA-1</strain>
    </source>
</reference>
<feature type="chain" id="PRO_1000080930" description="Aspartate 1-decarboxylase beta chain" evidence="1">
    <location>
        <begin position="1"/>
        <end position="24"/>
    </location>
</feature>
<feature type="chain" id="PRO_1000080931" description="Aspartate 1-decarboxylase alpha chain" evidence="1">
    <location>
        <begin position="25"/>
        <end position="120"/>
    </location>
</feature>
<feature type="active site" description="Schiff-base intermediate with substrate; via pyruvic acid" evidence="1">
    <location>
        <position position="25"/>
    </location>
</feature>
<feature type="active site" description="Proton donor" evidence="1">
    <location>
        <position position="58"/>
    </location>
</feature>
<feature type="binding site" evidence="1">
    <location>
        <position position="57"/>
    </location>
    <ligand>
        <name>substrate</name>
    </ligand>
</feature>
<feature type="binding site" evidence="1">
    <location>
        <begin position="73"/>
        <end position="75"/>
    </location>
    <ligand>
        <name>substrate</name>
    </ligand>
</feature>
<feature type="modified residue" description="Pyruvic acid (Ser)" evidence="1">
    <location>
        <position position="25"/>
    </location>
</feature>
<accession>A4SWK6</accession>
<comment type="function">
    <text evidence="1">Catalyzes the pyruvoyl-dependent decarboxylation of aspartate to produce beta-alanine.</text>
</comment>
<comment type="catalytic activity">
    <reaction evidence="1">
        <text>L-aspartate + H(+) = beta-alanine + CO2</text>
        <dbReference type="Rhea" id="RHEA:19497"/>
        <dbReference type="ChEBI" id="CHEBI:15378"/>
        <dbReference type="ChEBI" id="CHEBI:16526"/>
        <dbReference type="ChEBI" id="CHEBI:29991"/>
        <dbReference type="ChEBI" id="CHEBI:57966"/>
        <dbReference type="EC" id="4.1.1.11"/>
    </reaction>
</comment>
<comment type="cofactor">
    <cofactor evidence="1">
        <name>pyruvate</name>
        <dbReference type="ChEBI" id="CHEBI:15361"/>
    </cofactor>
    <text evidence="1">Binds 1 pyruvoyl group covalently per subunit.</text>
</comment>
<comment type="pathway">
    <text evidence="1">Cofactor biosynthesis; (R)-pantothenate biosynthesis; beta-alanine from L-aspartate: step 1/1.</text>
</comment>
<comment type="subunit">
    <text evidence="1">Heterooctamer of four alpha and four beta subunits.</text>
</comment>
<comment type="subcellular location">
    <subcellularLocation>
        <location evidence="1">Cytoplasm</location>
    </subcellularLocation>
</comment>
<comment type="PTM">
    <text evidence="1">Is synthesized initially as an inactive proenzyme, which is activated by self-cleavage at a specific serine bond to produce a beta-subunit with a hydroxyl group at its C-terminus and an alpha-subunit with a pyruvoyl group at its N-terminus.</text>
</comment>
<comment type="similarity">
    <text evidence="1">Belongs to the PanD family.</text>
</comment>
<sequence length="120" mass="13232">MNRIMLLAKIHRATVTEADLHYEGSCGIDEDLLDAANMREFEKIELYNINNGNRFSTYIIKAVRGSGIISLNGAAARKAHVGDHLIICTYGSVPDAEVNNHVPKIVLVGDNNSIKEIKKI</sequence>
<name>PAND_POLAQ</name>